<keyword id="KW-0472">Membrane</keyword>
<keyword id="KW-1185">Reference proteome</keyword>
<keyword id="KW-0732">Signal</keyword>
<keyword id="KW-0812">Transmembrane</keyword>
<keyword id="KW-1133">Transmembrane helix</keyword>
<reference key="1">
    <citation type="journal article" date="1997" name="Nature">
        <title>The complete genome sequence of the Gram-positive bacterium Bacillus subtilis.</title>
        <authorList>
            <person name="Kunst F."/>
            <person name="Ogasawara N."/>
            <person name="Moszer I."/>
            <person name="Albertini A.M."/>
            <person name="Alloni G."/>
            <person name="Azevedo V."/>
            <person name="Bertero M.G."/>
            <person name="Bessieres P."/>
            <person name="Bolotin A."/>
            <person name="Borchert S."/>
            <person name="Borriss R."/>
            <person name="Boursier L."/>
            <person name="Brans A."/>
            <person name="Braun M."/>
            <person name="Brignell S.C."/>
            <person name="Bron S."/>
            <person name="Brouillet S."/>
            <person name="Bruschi C.V."/>
            <person name="Caldwell B."/>
            <person name="Capuano V."/>
            <person name="Carter N.M."/>
            <person name="Choi S.-K."/>
            <person name="Codani J.-J."/>
            <person name="Connerton I.F."/>
            <person name="Cummings N.J."/>
            <person name="Daniel R.A."/>
            <person name="Denizot F."/>
            <person name="Devine K.M."/>
            <person name="Duesterhoeft A."/>
            <person name="Ehrlich S.D."/>
            <person name="Emmerson P.T."/>
            <person name="Entian K.-D."/>
            <person name="Errington J."/>
            <person name="Fabret C."/>
            <person name="Ferrari E."/>
            <person name="Foulger D."/>
            <person name="Fritz C."/>
            <person name="Fujita M."/>
            <person name="Fujita Y."/>
            <person name="Fuma S."/>
            <person name="Galizzi A."/>
            <person name="Galleron N."/>
            <person name="Ghim S.-Y."/>
            <person name="Glaser P."/>
            <person name="Goffeau A."/>
            <person name="Golightly E.J."/>
            <person name="Grandi G."/>
            <person name="Guiseppi G."/>
            <person name="Guy B.J."/>
            <person name="Haga K."/>
            <person name="Haiech J."/>
            <person name="Harwood C.R."/>
            <person name="Henaut A."/>
            <person name="Hilbert H."/>
            <person name="Holsappel S."/>
            <person name="Hosono S."/>
            <person name="Hullo M.-F."/>
            <person name="Itaya M."/>
            <person name="Jones L.-M."/>
            <person name="Joris B."/>
            <person name="Karamata D."/>
            <person name="Kasahara Y."/>
            <person name="Klaerr-Blanchard M."/>
            <person name="Klein C."/>
            <person name="Kobayashi Y."/>
            <person name="Koetter P."/>
            <person name="Koningstein G."/>
            <person name="Krogh S."/>
            <person name="Kumano M."/>
            <person name="Kurita K."/>
            <person name="Lapidus A."/>
            <person name="Lardinois S."/>
            <person name="Lauber J."/>
            <person name="Lazarevic V."/>
            <person name="Lee S.-M."/>
            <person name="Levine A."/>
            <person name="Liu H."/>
            <person name="Masuda S."/>
            <person name="Mauel C."/>
            <person name="Medigue C."/>
            <person name="Medina N."/>
            <person name="Mellado R.P."/>
            <person name="Mizuno M."/>
            <person name="Moestl D."/>
            <person name="Nakai S."/>
            <person name="Noback M."/>
            <person name="Noone D."/>
            <person name="O'Reilly M."/>
            <person name="Ogawa K."/>
            <person name="Ogiwara A."/>
            <person name="Oudega B."/>
            <person name="Park S.-H."/>
            <person name="Parro V."/>
            <person name="Pohl T.M."/>
            <person name="Portetelle D."/>
            <person name="Porwollik S."/>
            <person name="Prescott A.M."/>
            <person name="Presecan E."/>
            <person name="Pujic P."/>
            <person name="Purnelle B."/>
            <person name="Rapoport G."/>
            <person name="Rey M."/>
            <person name="Reynolds S."/>
            <person name="Rieger M."/>
            <person name="Rivolta C."/>
            <person name="Rocha E."/>
            <person name="Roche B."/>
            <person name="Rose M."/>
            <person name="Sadaie Y."/>
            <person name="Sato T."/>
            <person name="Scanlan E."/>
            <person name="Schleich S."/>
            <person name="Schroeter R."/>
            <person name="Scoffone F."/>
            <person name="Sekiguchi J."/>
            <person name="Sekowska A."/>
            <person name="Seror S.J."/>
            <person name="Serror P."/>
            <person name="Shin B.-S."/>
            <person name="Soldo B."/>
            <person name="Sorokin A."/>
            <person name="Tacconi E."/>
            <person name="Takagi T."/>
            <person name="Takahashi H."/>
            <person name="Takemaru K."/>
            <person name="Takeuchi M."/>
            <person name="Tamakoshi A."/>
            <person name="Tanaka T."/>
            <person name="Terpstra P."/>
            <person name="Tognoni A."/>
            <person name="Tosato V."/>
            <person name="Uchiyama S."/>
            <person name="Vandenbol M."/>
            <person name="Vannier F."/>
            <person name="Vassarotti A."/>
            <person name="Viari A."/>
            <person name="Wambutt R."/>
            <person name="Wedler E."/>
            <person name="Wedler H."/>
            <person name="Weitzenegger T."/>
            <person name="Winters P."/>
            <person name="Wipat A."/>
            <person name="Yamamoto H."/>
            <person name="Yamane K."/>
            <person name="Yasumoto K."/>
            <person name="Yata K."/>
            <person name="Yoshida K."/>
            <person name="Yoshikawa H.-F."/>
            <person name="Zumstein E."/>
            <person name="Yoshikawa H."/>
            <person name="Danchin A."/>
        </authorList>
    </citation>
    <scope>NUCLEOTIDE SEQUENCE [LARGE SCALE GENOMIC DNA]</scope>
    <source>
        <strain>168</strain>
    </source>
</reference>
<organism>
    <name type="scientific">Bacillus subtilis (strain 168)</name>
    <dbReference type="NCBI Taxonomy" id="224308"/>
    <lineage>
        <taxon>Bacteria</taxon>
        <taxon>Bacillati</taxon>
        <taxon>Bacillota</taxon>
        <taxon>Bacilli</taxon>
        <taxon>Bacillales</taxon>
        <taxon>Bacillaceae</taxon>
        <taxon>Bacillus</taxon>
    </lineage>
</organism>
<sequence length="73" mass="8388">MKILGVTGFILICLLAISVLMDMLQGFSLTKAVYNNMSSFKMTTFAEWVVLLFFVLVLVREMYVIYKSKKKNP</sequence>
<evidence type="ECO:0000255" key="1"/>
<evidence type="ECO:0000305" key="2"/>
<gene>
    <name type="primary">yczF</name>
    <name type="ordered locus">BSU03690</name>
</gene>
<comment type="subcellular location">
    <subcellularLocation>
        <location evidence="2">Membrane</location>
        <topology evidence="2">Single-pass membrane protein</topology>
    </subcellularLocation>
</comment>
<feature type="signal peptide" evidence="1">
    <location>
        <begin position="1"/>
        <end position="22"/>
    </location>
</feature>
<feature type="chain" id="PRO_0000013693" description="Uncharacterized protein YczF">
    <location>
        <begin position="23"/>
        <end position="73"/>
    </location>
</feature>
<feature type="transmembrane region" description="Helical" evidence="1">
    <location>
        <begin position="44"/>
        <end position="66"/>
    </location>
</feature>
<protein>
    <recommendedName>
        <fullName>Uncharacterized protein YczF</fullName>
    </recommendedName>
</protein>
<name>YCZF_BACSU</name>
<proteinExistence type="inferred from homology"/>
<dbReference type="EMBL" id="AL009126">
    <property type="protein sequence ID" value="CAB12177.1"/>
    <property type="molecule type" value="Genomic_DNA"/>
</dbReference>
<dbReference type="PIR" id="D69767">
    <property type="entry name" value="D69767"/>
</dbReference>
<dbReference type="RefSeq" id="NP_388251.1">
    <property type="nucleotide sequence ID" value="NC_000964.3"/>
</dbReference>
<dbReference type="RefSeq" id="WP_003246546.1">
    <property type="nucleotide sequence ID" value="NZ_OZ025638.1"/>
</dbReference>
<dbReference type="SMR" id="O31479"/>
<dbReference type="FunCoup" id="O31479">
    <property type="interactions" value="207"/>
</dbReference>
<dbReference type="STRING" id="224308.BSU03690"/>
<dbReference type="PaxDb" id="224308-BSU03690"/>
<dbReference type="EnsemblBacteria" id="CAB12177">
    <property type="protein sequence ID" value="CAB12177"/>
    <property type="gene ID" value="BSU_03690"/>
</dbReference>
<dbReference type="GeneID" id="938290"/>
<dbReference type="KEGG" id="bsu:BSU03690"/>
<dbReference type="PATRIC" id="fig|224308.179.peg.389"/>
<dbReference type="InParanoid" id="O31479"/>
<dbReference type="OrthoDB" id="2889637at2"/>
<dbReference type="BioCyc" id="BSUB:BSU03690-MONOMER"/>
<dbReference type="Proteomes" id="UP000001570">
    <property type="component" value="Chromosome"/>
</dbReference>
<dbReference type="GO" id="GO:0016020">
    <property type="term" value="C:membrane"/>
    <property type="evidence" value="ECO:0007669"/>
    <property type="project" value="UniProtKB-SubCell"/>
</dbReference>
<accession>O31479</accession>